<proteinExistence type="inferred from homology"/>
<sequence length="251" mass="28148">MAVHLLIVDALNLIRRIHAVQGSPCVETCQHALDQLIMHSQPTHAVAVFDDENRSSGWRHQRLPDYKAGRPPMPEELHNEMPALRAAFEQRGVPCWSASGNEADDLAATLAVKVTQAGHQATIVSTDKGYCQLLSPTLRIRDYFQKRWLDAPFIDKEFGVQPQQLPDYWGLAGISSSKVPGVAGIGPKSATQLLVEFQSLEGIYENLDAVAEKWRKKLENHKEMAFLCRDIARLQTDLHIDGNLQQLRLVR</sequence>
<accession>Q0TE61</accession>
<gene>
    <name evidence="1" type="primary">xni</name>
    <name evidence="1" type="synonym">ygdG</name>
    <name type="ordered locus">ECP_2781</name>
</gene>
<reference key="1">
    <citation type="journal article" date="2006" name="Mol. Microbiol.">
        <title>Role of pathogenicity island-associated integrases in the genome plasticity of uropathogenic Escherichia coli strain 536.</title>
        <authorList>
            <person name="Hochhut B."/>
            <person name="Wilde C."/>
            <person name="Balling G."/>
            <person name="Middendorf B."/>
            <person name="Dobrindt U."/>
            <person name="Brzuszkiewicz E."/>
            <person name="Gottschalk G."/>
            <person name="Carniel E."/>
            <person name="Hacker J."/>
        </authorList>
    </citation>
    <scope>NUCLEOTIDE SEQUENCE [LARGE SCALE GENOMIC DNA]</scope>
    <source>
        <strain>536 / UPEC</strain>
    </source>
</reference>
<comment type="function">
    <text evidence="1">Has flap endonuclease activity. During DNA replication, flap endonucleases cleave the 5'-overhanging flap structure that is generated by displacement synthesis when DNA polymerase encounters the 5'-end of a downstream Okazaki fragment.</text>
</comment>
<comment type="cofactor">
    <cofactor evidence="1">
        <name>Mg(2+)</name>
        <dbReference type="ChEBI" id="CHEBI:18420"/>
    </cofactor>
    <text evidence="1">Binds 2 Mg(2+) per subunit. Only one magnesium ion has a direct interaction with the protein, the other interactions are indirect.</text>
</comment>
<comment type="cofactor">
    <cofactor evidence="1">
        <name>K(+)</name>
        <dbReference type="ChEBI" id="CHEBI:29103"/>
    </cofactor>
    <text evidence="1">Binds 1 K(+) per subunit. The potassium ion strongly increases the affinity for DNA.</text>
</comment>
<comment type="similarity">
    <text evidence="1">Belongs to the Xni family.</text>
</comment>
<name>XNI_ECOL5</name>
<protein>
    <recommendedName>
        <fullName evidence="1">Flap endonuclease Xni</fullName>
        <shortName evidence="1">FEN</shortName>
        <ecNumber evidence="1">3.1.-.-</ecNumber>
    </recommendedName>
</protein>
<organism>
    <name type="scientific">Escherichia coli O6:K15:H31 (strain 536 / UPEC)</name>
    <dbReference type="NCBI Taxonomy" id="362663"/>
    <lineage>
        <taxon>Bacteria</taxon>
        <taxon>Pseudomonadati</taxon>
        <taxon>Pseudomonadota</taxon>
        <taxon>Gammaproteobacteria</taxon>
        <taxon>Enterobacterales</taxon>
        <taxon>Enterobacteriaceae</taxon>
        <taxon>Escherichia</taxon>
    </lineage>
</organism>
<keyword id="KW-0238">DNA-binding</keyword>
<keyword id="KW-0255">Endonuclease</keyword>
<keyword id="KW-0378">Hydrolase</keyword>
<keyword id="KW-0460">Magnesium</keyword>
<keyword id="KW-0479">Metal-binding</keyword>
<keyword id="KW-0540">Nuclease</keyword>
<keyword id="KW-0630">Potassium</keyword>
<dbReference type="EC" id="3.1.-.-" evidence="1"/>
<dbReference type="EMBL" id="CP000247">
    <property type="protein sequence ID" value="ABG70768.1"/>
    <property type="molecule type" value="Genomic_DNA"/>
</dbReference>
<dbReference type="RefSeq" id="WP_001298168.1">
    <property type="nucleotide sequence ID" value="NC_008253.1"/>
</dbReference>
<dbReference type="SMR" id="Q0TE61"/>
<dbReference type="KEGG" id="ecp:ECP_2781"/>
<dbReference type="HOGENOM" id="CLU_004675_1_2_6"/>
<dbReference type="Proteomes" id="UP000009182">
    <property type="component" value="Chromosome"/>
</dbReference>
<dbReference type="GO" id="GO:0008409">
    <property type="term" value="F:5'-3' exonuclease activity"/>
    <property type="evidence" value="ECO:0007669"/>
    <property type="project" value="InterPro"/>
</dbReference>
<dbReference type="GO" id="GO:0017108">
    <property type="term" value="F:5'-flap endonuclease activity"/>
    <property type="evidence" value="ECO:0007669"/>
    <property type="project" value="UniProtKB-UniRule"/>
</dbReference>
<dbReference type="GO" id="GO:0003677">
    <property type="term" value="F:DNA binding"/>
    <property type="evidence" value="ECO:0007669"/>
    <property type="project" value="UniProtKB-UniRule"/>
</dbReference>
<dbReference type="GO" id="GO:0000287">
    <property type="term" value="F:magnesium ion binding"/>
    <property type="evidence" value="ECO:0007669"/>
    <property type="project" value="UniProtKB-UniRule"/>
</dbReference>
<dbReference type="GO" id="GO:0030955">
    <property type="term" value="F:potassium ion binding"/>
    <property type="evidence" value="ECO:0007669"/>
    <property type="project" value="UniProtKB-UniRule"/>
</dbReference>
<dbReference type="GO" id="GO:0033567">
    <property type="term" value="P:DNA replication, Okazaki fragment processing"/>
    <property type="evidence" value="ECO:0007669"/>
    <property type="project" value="UniProtKB-UniRule"/>
</dbReference>
<dbReference type="CDD" id="cd09898">
    <property type="entry name" value="H3TH_53EXO"/>
    <property type="match status" value="1"/>
</dbReference>
<dbReference type="CDD" id="cd09859">
    <property type="entry name" value="PIN_53EXO"/>
    <property type="match status" value="1"/>
</dbReference>
<dbReference type="FunFam" id="1.10.150.20:FF:000003">
    <property type="entry name" value="DNA polymerase I"/>
    <property type="match status" value="1"/>
</dbReference>
<dbReference type="FunFam" id="3.40.50.1010:FF:000011">
    <property type="entry name" value="Flap endonuclease Xni"/>
    <property type="match status" value="1"/>
</dbReference>
<dbReference type="Gene3D" id="1.10.150.20">
    <property type="entry name" value="5' to 3' exonuclease, C-terminal subdomain"/>
    <property type="match status" value="1"/>
</dbReference>
<dbReference type="Gene3D" id="3.40.50.1010">
    <property type="entry name" value="5'-nuclease"/>
    <property type="match status" value="1"/>
</dbReference>
<dbReference type="HAMAP" id="MF_01192">
    <property type="entry name" value="Xni"/>
    <property type="match status" value="1"/>
</dbReference>
<dbReference type="InterPro" id="IPR020046">
    <property type="entry name" value="5-3_exonucl_a-hlix_arch_N"/>
</dbReference>
<dbReference type="InterPro" id="IPR002421">
    <property type="entry name" value="5-3_exonuclease"/>
</dbReference>
<dbReference type="InterPro" id="IPR036279">
    <property type="entry name" value="5-3_exonuclease_C_sf"/>
</dbReference>
<dbReference type="InterPro" id="IPR020045">
    <property type="entry name" value="DNA_polI_H3TH"/>
</dbReference>
<dbReference type="InterPro" id="IPR038969">
    <property type="entry name" value="FEN"/>
</dbReference>
<dbReference type="InterPro" id="IPR008918">
    <property type="entry name" value="HhH2"/>
</dbReference>
<dbReference type="InterPro" id="IPR029060">
    <property type="entry name" value="PIN-like_dom_sf"/>
</dbReference>
<dbReference type="InterPro" id="IPR022895">
    <property type="entry name" value="Xni"/>
</dbReference>
<dbReference type="NCBIfam" id="NF007017">
    <property type="entry name" value="PRK09482.1"/>
    <property type="match status" value="1"/>
</dbReference>
<dbReference type="PANTHER" id="PTHR42646:SF2">
    <property type="entry name" value="5'-3' EXONUCLEASE FAMILY PROTEIN"/>
    <property type="match status" value="1"/>
</dbReference>
<dbReference type="PANTHER" id="PTHR42646">
    <property type="entry name" value="FLAP ENDONUCLEASE XNI"/>
    <property type="match status" value="1"/>
</dbReference>
<dbReference type="Pfam" id="PF01367">
    <property type="entry name" value="5_3_exonuc"/>
    <property type="match status" value="1"/>
</dbReference>
<dbReference type="Pfam" id="PF02739">
    <property type="entry name" value="5_3_exonuc_N"/>
    <property type="match status" value="1"/>
</dbReference>
<dbReference type="SMART" id="SM00475">
    <property type="entry name" value="53EXOc"/>
    <property type="match status" value="1"/>
</dbReference>
<dbReference type="SMART" id="SM00279">
    <property type="entry name" value="HhH2"/>
    <property type="match status" value="1"/>
</dbReference>
<dbReference type="SUPFAM" id="SSF47807">
    <property type="entry name" value="5' to 3' exonuclease, C-terminal subdomain"/>
    <property type="match status" value="1"/>
</dbReference>
<dbReference type="SUPFAM" id="SSF88723">
    <property type="entry name" value="PIN domain-like"/>
    <property type="match status" value="1"/>
</dbReference>
<evidence type="ECO:0000255" key="1">
    <source>
        <dbReference type="HAMAP-Rule" id="MF_01192"/>
    </source>
</evidence>
<feature type="chain" id="PRO_0000297864" description="Flap endonuclease Xni">
    <location>
        <begin position="1"/>
        <end position="251"/>
    </location>
</feature>
<feature type="domain" description="5'-3' exonuclease" evidence="1">
    <location>
        <begin position="160"/>
        <end position="249"/>
    </location>
</feature>
<feature type="region of interest" description="Interaction with DNA" evidence="1">
    <location>
        <begin position="184"/>
        <end position="189"/>
    </location>
</feature>
<feature type="binding site" evidence="1">
    <location>
        <position position="104"/>
    </location>
    <ligand>
        <name>Mg(2+)</name>
        <dbReference type="ChEBI" id="CHEBI:18420"/>
    </ligand>
</feature>
<feature type="binding site" evidence="1">
    <location>
        <position position="171"/>
    </location>
    <ligand>
        <name>K(+)</name>
        <dbReference type="ChEBI" id="CHEBI:29103"/>
    </ligand>
</feature>
<feature type="binding site" evidence="1">
    <location>
        <position position="172"/>
    </location>
    <ligand>
        <name>K(+)</name>
        <dbReference type="ChEBI" id="CHEBI:29103"/>
    </ligand>
</feature>
<feature type="binding site" evidence="1">
    <location>
        <position position="180"/>
    </location>
    <ligand>
        <name>K(+)</name>
        <dbReference type="ChEBI" id="CHEBI:29103"/>
    </ligand>
</feature>
<feature type="binding site" evidence="1">
    <location>
        <position position="182"/>
    </location>
    <ligand>
        <name>K(+)</name>
        <dbReference type="ChEBI" id="CHEBI:29103"/>
    </ligand>
</feature>
<feature type="binding site" evidence="1">
    <location>
        <position position="185"/>
    </location>
    <ligand>
        <name>K(+)</name>
        <dbReference type="ChEBI" id="CHEBI:29103"/>
    </ligand>
</feature>